<gene>
    <name evidence="1" type="primary">lpxK</name>
    <name type="ordered locus">EcHS_A1022</name>
</gene>
<keyword id="KW-0067">ATP-binding</keyword>
<keyword id="KW-0418">Kinase</keyword>
<keyword id="KW-0441">Lipid A biosynthesis</keyword>
<keyword id="KW-0444">Lipid biosynthesis</keyword>
<keyword id="KW-0443">Lipid metabolism</keyword>
<keyword id="KW-0547">Nucleotide-binding</keyword>
<keyword id="KW-0808">Transferase</keyword>
<evidence type="ECO:0000255" key="1">
    <source>
        <dbReference type="HAMAP-Rule" id="MF_00409"/>
    </source>
</evidence>
<organism>
    <name type="scientific">Escherichia coli O9:H4 (strain HS)</name>
    <dbReference type="NCBI Taxonomy" id="331112"/>
    <lineage>
        <taxon>Bacteria</taxon>
        <taxon>Pseudomonadati</taxon>
        <taxon>Pseudomonadota</taxon>
        <taxon>Gammaproteobacteria</taxon>
        <taxon>Enterobacterales</taxon>
        <taxon>Enterobacteriaceae</taxon>
        <taxon>Escherichia</taxon>
    </lineage>
</organism>
<feature type="chain" id="PRO_1000123709" description="Tetraacyldisaccharide 4'-kinase">
    <location>
        <begin position="1"/>
        <end position="328"/>
    </location>
</feature>
<feature type="binding site" evidence="1">
    <location>
        <begin position="55"/>
        <end position="62"/>
    </location>
    <ligand>
        <name>ATP</name>
        <dbReference type="ChEBI" id="CHEBI:30616"/>
    </ligand>
</feature>
<comment type="function">
    <text evidence="1">Transfers the gamma-phosphate of ATP to the 4'-position of a tetraacyldisaccharide 1-phosphate intermediate (termed DS-1-P) to form tetraacyldisaccharide 1,4'-bis-phosphate (lipid IVA).</text>
</comment>
<comment type="catalytic activity">
    <reaction evidence="1">
        <text>a lipid A disaccharide + ATP = a lipid IVA + ADP + H(+)</text>
        <dbReference type="Rhea" id="RHEA:67840"/>
        <dbReference type="ChEBI" id="CHEBI:15378"/>
        <dbReference type="ChEBI" id="CHEBI:30616"/>
        <dbReference type="ChEBI" id="CHEBI:176343"/>
        <dbReference type="ChEBI" id="CHEBI:176425"/>
        <dbReference type="ChEBI" id="CHEBI:456216"/>
        <dbReference type="EC" id="2.7.1.130"/>
    </reaction>
</comment>
<comment type="pathway">
    <text evidence="1">Glycolipid biosynthesis; lipid IV(A) biosynthesis; lipid IV(A) from (3R)-3-hydroxytetradecanoyl-[acyl-carrier-protein] and UDP-N-acetyl-alpha-D-glucosamine: step 6/6.</text>
</comment>
<comment type="similarity">
    <text evidence="1">Belongs to the LpxK family.</text>
</comment>
<reference key="1">
    <citation type="journal article" date="2008" name="J. Bacteriol.">
        <title>The pangenome structure of Escherichia coli: comparative genomic analysis of E. coli commensal and pathogenic isolates.</title>
        <authorList>
            <person name="Rasko D.A."/>
            <person name="Rosovitz M.J."/>
            <person name="Myers G.S.A."/>
            <person name="Mongodin E.F."/>
            <person name="Fricke W.F."/>
            <person name="Gajer P."/>
            <person name="Crabtree J."/>
            <person name="Sebaihia M."/>
            <person name="Thomson N.R."/>
            <person name="Chaudhuri R."/>
            <person name="Henderson I.R."/>
            <person name="Sperandio V."/>
            <person name="Ravel J."/>
        </authorList>
    </citation>
    <scope>NUCLEOTIDE SEQUENCE [LARGE SCALE GENOMIC DNA]</scope>
    <source>
        <strain>HS</strain>
    </source>
</reference>
<sequence>MIEKIWSGESPLWRLLLPLSWLYGLVSGAIRLCYKLKLKRAWRAPVPVVVVGNLTAGGNGKTPVVVWLVEQLQQRGIRVGVVSRGYGGKAESYPLLLSADTTTAQAGDEPVLIYQRTDAPVAVSPVRSDAVKAILAQHPDVQIIVTDDGLQHYRLARDVEIVVIDGVRRFGNGWWLPAGPMRERAGRLKSVDAVIVNGGVPRSGEIPMHLLPGQAVNLRTGTRCDVAQLEHVVAMAGIGHPPRFFATLKMCGVQPEKCVPLADHQSLNHADVSALVSAGQTLVMTEKDAVKCRAFAEENWWYLPVDAQLSGDEPAKLLTQLTSLASGN</sequence>
<accession>A7ZYL7</accession>
<name>LPXK_ECOHS</name>
<proteinExistence type="inferred from homology"/>
<protein>
    <recommendedName>
        <fullName evidence="1">Tetraacyldisaccharide 4'-kinase</fullName>
        <ecNumber evidence="1">2.7.1.130</ecNumber>
    </recommendedName>
    <alternativeName>
        <fullName evidence="1">Lipid A 4'-kinase</fullName>
    </alternativeName>
</protein>
<dbReference type="EC" id="2.7.1.130" evidence="1"/>
<dbReference type="EMBL" id="CP000802">
    <property type="protein sequence ID" value="ABV05371.1"/>
    <property type="molecule type" value="Genomic_DNA"/>
</dbReference>
<dbReference type="RefSeq" id="WP_000570540.1">
    <property type="nucleotide sequence ID" value="NC_009800.1"/>
</dbReference>
<dbReference type="SMR" id="A7ZYL7"/>
<dbReference type="GeneID" id="93776500"/>
<dbReference type="KEGG" id="ecx:EcHS_A1022"/>
<dbReference type="HOGENOM" id="CLU_038816_2_0_6"/>
<dbReference type="UniPathway" id="UPA00359">
    <property type="reaction ID" value="UER00482"/>
</dbReference>
<dbReference type="GO" id="GO:0005886">
    <property type="term" value="C:plasma membrane"/>
    <property type="evidence" value="ECO:0007669"/>
    <property type="project" value="TreeGrafter"/>
</dbReference>
<dbReference type="GO" id="GO:0005524">
    <property type="term" value="F:ATP binding"/>
    <property type="evidence" value="ECO:0007669"/>
    <property type="project" value="UniProtKB-UniRule"/>
</dbReference>
<dbReference type="GO" id="GO:0009029">
    <property type="term" value="F:tetraacyldisaccharide 4'-kinase activity"/>
    <property type="evidence" value="ECO:0007669"/>
    <property type="project" value="UniProtKB-UniRule"/>
</dbReference>
<dbReference type="GO" id="GO:0009245">
    <property type="term" value="P:lipid A biosynthetic process"/>
    <property type="evidence" value="ECO:0007669"/>
    <property type="project" value="UniProtKB-UniRule"/>
</dbReference>
<dbReference type="GO" id="GO:0009244">
    <property type="term" value="P:lipopolysaccharide core region biosynthetic process"/>
    <property type="evidence" value="ECO:0007669"/>
    <property type="project" value="TreeGrafter"/>
</dbReference>
<dbReference type="HAMAP" id="MF_00409">
    <property type="entry name" value="LpxK"/>
    <property type="match status" value="1"/>
</dbReference>
<dbReference type="InterPro" id="IPR003758">
    <property type="entry name" value="LpxK"/>
</dbReference>
<dbReference type="InterPro" id="IPR027417">
    <property type="entry name" value="P-loop_NTPase"/>
</dbReference>
<dbReference type="NCBIfam" id="TIGR00682">
    <property type="entry name" value="lpxK"/>
    <property type="match status" value="1"/>
</dbReference>
<dbReference type="PANTHER" id="PTHR42724">
    <property type="entry name" value="TETRAACYLDISACCHARIDE 4'-KINASE"/>
    <property type="match status" value="1"/>
</dbReference>
<dbReference type="PANTHER" id="PTHR42724:SF1">
    <property type="entry name" value="TETRAACYLDISACCHARIDE 4'-KINASE, MITOCHONDRIAL-RELATED"/>
    <property type="match status" value="1"/>
</dbReference>
<dbReference type="Pfam" id="PF02606">
    <property type="entry name" value="LpxK"/>
    <property type="match status" value="1"/>
</dbReference>
<dbReference type="SUPFAM" id="SSF52540">
    <property type="entry name" value="P-loop containing nucleoside triphosphate hydrolases"/>
    <property type="match status" value="1"/>
</dbReference>